<name>NUSB_CLOB6</name>
<sequence length="143" mass="16711">MNRRKSREVAMRLLFQTTLNGENLEEALENLKDVRESEEITKEKDYESVDLKDVDIDYVKRIIKGIEENKEEIDEKIKGNLKNWKIERLSKVDLSILRLCTYELKFEEDIPNRVSVNEAIELAKKYSGEKSATFINGVLGKMI</sequence>
<feature type="chain" id="PRO_1000202473" description="Transcription antitermination protein NusB">
    <location>
        <begin position="1"/>
        <end position="143"/>
    </location>
</feature>
<organism>
    <name type="scientific">Clostridium botulinum (strain 657 / Type Ba4)</name>
    <dbReference type="NCBI Taxonomy" id="515621"/>
    <lineage>
        <taxon>Bacteria</taxon>
        <taxon>Bacillati</taxon>
        <taxon>Bacillota</taxon>
        <taxon>Clostridia</taxon>
        <taxon>Eubacteriales</taxon>
        <taxon>Clostridiaceae</taxon>
        <taxon>Clostridium</taxon>
    </lineage>
</organism>
<keyword id="KW-0694">RNA-binding</keyword>
<keyword id="KW-0804">Transcription</keyword>
<keyword id="KW-0889">Transcription antitermination</keyword>
<keyword id="KW-0805">Transcription regulation</keyword>
<accession>C3KXC7</accession>
<protein>
    <recommendedName>
        <fullName evidence="1">Transcription antitermination protein NusB</fullName>
    </recommendedName>
    <alternativeName>
        <fullName evidence="1">Antitermination factor NusB</fullName>
    </alternativeName>
</protein>
<evidence type="ECO:0000255" key="1">
    <source>
        <dbReference type="HAMAP-Rule" id="MF_00073"/>
    </source>
</evidence>
<proteinExistence type="inferred from homology"/>
<reference key="1">
    <citation type="submission" date="2008-05" db="EMBL/GenBank/DDBJ databases">
        <title>Genome sequence of Clostridium botulinum Ba4 strain 657.</title>
        <authorList>
            <person name="Shrivastava S."/>
            <person name="Brown J.L."/>
            <person name="Bruce D."/>
            <person name="Detter C."/>
            <person name="Munk C."/>
            <person name="Smith L.A."/>
            <person name="Smith T.J."/>
            <person name="Sutton G."/>
            <person name="Brettin T.S."/>
        </authorList>
    </citation>
    <scope>NUCLEOTIDE SEQUENCE [LARGE SCALE GENOMIC DNA]</scope>
    <source>
        <strain>657 / Type Ba4</strain>
    </source>
</reference>
<comment type="function">
    <text evidence="1">Involved in transcription antitermination. Required for transcription of ribosomal RNA (rRNA) genes. Binds specifically to the boxA antiterminator sequence of the ribosomal RNA (rrn) operons.</text>
</comment>
<comment type="similarity">
    <text evidence="1">Belongs to the NusB family.</text>
</comment>
<dbReference type="EMBL" id="CP001083">
    <property type="protein sequence ID" value="ACQ52748.1"/>
    <property type="molecule type" value="Genomic_DNA"/>
</dbReference>
<dbReference type="RefSeq" id="WP_003358828.1">
    <property type="nucleotide sequence ID" value="NC_012658.1"/>
</dbReference>
<dbReference type="SMR" id="C3KXC7"/>
<dbReference type="GeneID" id="5186053"/>
<dbReference type="KEGG" id="cbi:CLJ_B2073"/>
<dbReference type="HOGENOM" id="CLU_087843_3_1_9"/>
<dbReference type="Proteomes" id="UP000002333">
    <property type="component" value="Chromosome"/>
</dbReference>
<dbReference type="GO" id="GO:0005829">
    <property type="term" value="C:cytosol"/>
    <property type="evidence" value="ECO:0007669"/>
    <property type="project" value="TreeGrafter"/>
</dbReference>
<dbReference type="GO" id="GO:0003723">
    <property type="term" value="F:RNA binding"/>
    <property type="evidence" value="ECO:0007669"/>
    <property type="project" value="UniProtKB-UniRule"/>
</dbReference>
<dbReference type="GO" id="GO:0006353">
    <property type="term" value="P:DNA-templated transcription termination"/>
    <property type="evidence" value="ECO:0007669"/>
    <property type="project" value="UniProtKB-UniRule"/>
</dbReference>
<dbReference type="GO" id="GO:0031564">
    <property type="term" value="P:transcription antitermination"/>
    <property type="evidence" value="ECO:0007669"/>
    <property type="project" value="UniProtKB-KW"/>
</dbReference>
<dbReference type="FunFam" id="1.10.940.10:FF:000003">
    <property type="entry name" value="Transcription antitermination factor NusB"/>
    <property type="match status" value="1"/>
</dbReference>
<dbReference type="Gene3D" id="1.10.940.10">
    <property type="entry name" value="NusB-like"/>
    <property type="match status" value="1"/>
</dbReference>
<dbReference type="HAMAP" id="MF_00073">
    <property type="entry name" value="NusB"/>
    <property type="match status" value="1"/>
</dbReference>
<dbReference type="InterPro" id="IPR035926">
    <property type="entry name" value="NusB-like_sf"/>
</dbReference>
<dbReference type="InterPro" id="IPR011605">
    <property type="entry name" value="NusB_fam"/>
</dbReference>
<dbReference type="InterPro" id="IPR006027">
    <property type="entry name" value="NusB_RsmB_TIM44"/>
</dbReference>
<dbReference type="NCBIfam" id="TIGR01951">
    <property type="entry name" value="nusB"/>
    <property type="match status" value="1"/>
</dbReference>
<dbReference type="PANTHER" id="PTHR11078:SF3">
    <property type="entry name" value="ANTITERMINATION NUSB DOMAIN-CONTAINING PROTEIN"/>
    <property type="match status" value="1"/>
</dbReference>
<dbReference type="PANTHER" id="PTHR11078">
    <property type="entry name" value="N UTILIZATION SUBSTANCE PROTEIN B-RELATED"/>
    <property type="match status" value="1"/>
</dbReference>
<dbReference type="Pfam" id="PF01029">
    <property type="entry name" value="NusB"/>
    <property type="match status" value="1"/>
</dbReference>
<dbReference type="SUPFAM" id="SSF48013">
    <property type="entry name" value="NusB-like"/>
    <property type="match status" value="1"/>
</dbReference>
<gene>
    <name evidence="1" type="primary">nusB</name>
    <name type="ordered locus">CLJ_B2073</name>
</gene>